<protein>
    <recommendedName>
        <fullName>SPX domain-containing membrane protein Os06g0129400</fullName>
    </recommendedName>
</protein>
<accession>Q658H5</accession>
<accession>Q0DEX8</accession>
<organism>
    <name type="scientific">Oryza sativa subsp. japonica</name>
    <name type="common">Rice</name>
    <dbReference type="NCBI Taxonomy" id="39947"/>
    <lineage>
        <taxon>Eukaryota</taxon>
        <taxon>Viridiplantae</taxon>
        <taxon>Streptophyta</taxon>
        <taxon>Embryophyta</taxon>
        <taxon>Tracheophyta</taxon>
        <taxon>Spermatophyta</taxon>
        <taxon>Magnoliopsida</taxon>
        <taxon>Liliopsida</taxon>
        <taxon>Poales</taxon>
        <taxon>Poaceae</taxon>
        <taxon>BOP clade</taxon>
        <taxon>Oryzoideae</taxon>
        <taxon>Oryzeae</taxon>
        <taxon>Oryzinae</taxon>
        <taxon>Oryza</taxon>
        <taxon>Oryza sativa</taxon>
    </lineage>
</organism>
<evidence type="ECO:0000255" key="1"/>
<evidence type="ECO:0000255" key="2">
    <source>
        <dbReference type="PROSITE-ProRule" id="PRU00714"/>
    </source>
</evidence>
<evidence type="ECO:0000256" key="3">
    <source>
        <dbReference type="SAM" id="MobiDB-lite"/>
    </source>
</evidence>
<evidence type="ECO:0000303" key="4">
    <source ref="5"/>
</evidence>
<evidence type="ECO:0000305" key="5"/>
<name>SPXM3_ORYSJ</name>
<reference key="1">
    <citation type="journal article" date="2005" name="Nature">
        <title>The map-based sequence of the rice genome.</title>
        <authorList>
            <consortium name="International rice genome sequencing project (IRGSP)"/>
        </authorList>
    </citation>
    <scope>NUCLEOTIDE SEQUENCE [LARGE SCALE GENOMIC DNA]</scope>
    <source>
        <strain>cv. Nipponbare</strain>
    </source>
</reference>
<reference key="2">
    <citation type="journal article" date="2008" name="Nucleic Acids Res.">
        <title>The rice annotation project database (RAP-DB): 2008 update.</title>
        <authorList>
            <consortium name="The rice annotation project (RAP)"/>
        </authorList>
    </citation>
    <scope>GENOME REANNOTATION</scope>
    <source>
        <strain>cv. Nipponbare</strain>
    </source>
</reference>
<reference key="3">
    <citation type="journal article" date="2013" name="Rice">
        <title>Improvement of the Oryza sativa Nipponbare reference genome using next generation sequence and optical map data.</title>
        <authorList>
            <person name="Kawahara Y."/>
            <person name="de la Bastide M."/>
            <person name="Hamilton J.P."/>
            <person name="Kanamori H."/>
            <person name="McCombie W.R."/>
            <person name="Ouyang S."/>
            <person name="Schwartz D.C."/>
            <person name="Tanaka T."/>
            <person name="Wu J."/>
            <person name="Zhou S."/>
            <person name="Childs K.L."/>
            <person name="Davidson R.M."/>
            <person name="Lin H."/>
            <person name="Quesada-Ocampo L."/>
            <person name="Vaillancourt B."/>
            <person name="Sakai H."/>
            <person name="Lee S.S."/>
            <person name="Kim J."/>
            <person name="Numa H."/>
            <person name="Itoh T."/>
            <person name="Buell C.R."/>
            <person name="Matsumoto T."/>
        </authorList>
    </citation>
    <scope>GENOME REANNOTATION</scope>
    <source>
        <strain>cv. Nipponbare</strain>
    </source>
</reference>
<reference key="4">
    <citation type="journal article" date="2005" name="PLoS Biol.">
        <title>The genomes of Oryza sativa: a history of duplications.</title>
        <authorList>
            <person name="Yu J."/>
            <person name="Wang J."/>
            <person name="Lin W."/>
            <person name="Li S."/>
            <person name="Li H."/>
            <person name="Zhou J."/>
            <person name="Ni P."/>
            <person name="Dong W."/>
            <person name="Hu S."/>
            <person name="Zeng C."/>
            <person name="Zhang J."/>
            <person name="Zhang Y."/>
            <person name="Li R."/>
            <person name="Xu Z."/>
            <person name="Li S."/>
            <person name="Li X."/>
            <person name="Zheng H."/>
            <person name="Cong L."/>
            <person name="Lin L."/>
            <person name="Yin J."/>
            <person name="Geng J."/>
            <person name="Li G."/>
            <person name="Shi J."/>
            <person name="Liu J."/>
            <person name="Lv H."/>
            <person name="Li J."/>
            <person name="Wang J."/>
            <person name="Deng Y."/>
            <person name="Ran L."/>
            <person name="Shi X."/>
            <person name="Wang X."/>
            <person name="Wu Q."/>
            <person name="Li C."/>
            <person name="Ren X."/>
            <person name="Wang J."/>
            <person name="Wang X."/>
            <person name="Li D."/>
            <person name="Liu D."/>
            <person name="Zhang X."/>
            <person name="Ji Z."/>
            <person name="Zhao W."/>
            <person name="Sun Y."/>
            <person name="Zhang Z."/>
            <person name="Bao J."/>
            <person name="Han Y."/>
            <person name="Dong L."/>
            <person name="Ji J."/>
            <person name="Chen P."/>
            <person name="Wu S."/>
            <person name="Liu J."/>
            <person name="Xiao Y."/>
            <person name="Bu D."/>
            <person name="Tan J."/>
            <person name="Yang L."/>
            <person name="Ye C."/>
            <person name="Zhang J."/>
            <person name="Xu J."/>
            <person name="Zhou Y."/>
            <person name="Yu Y."/>
            <person name="Zhang B."/>
            <person name="Zhuang S."/>
            <person name="Wei H."/>
            <person name="Liu B."/>
            <person name="Lei M."/>
            <person name="Yu H."/>
            <person name="Li Y."/>
            <person name="Xu H."/>
            <person name="Wei S."/>
            <person name="He X."/>
            <person name="Fang L."/>
            <person name="Zhang Z."/>
            <person name="Zhang Y."/>
            <person name="Huang X."/>
            <person name="Su Z."/>
            <person name="Tong W."/>
            <person name="Li J."/>
            <person name="Tong Z."/>
            <person name="Li S."/>
            <person name="Ye J."/>
            <person name="Wang L."/>
            <person name="Fang L."/>
            <person name="Lei T."/>
            <person name="Chen C.-S."/>
            <person name="Chen H.-C."/>
            <person name="Xu Z."/>
            <person name="Li H."/>
            <person name="Huang H."/>
            <person name="Zhang F."/>
            <person name="Xu H."/>
            <person name="Li N."/>
            <person name="Zhao C."/>
            <person name="Li S."/>
            <person name="Dong L."/>
            <person name="Huang Y."/>
            <person name="Li L."/>
            <person name="Xi Y."/>
            <person name="Qi Q."/>
            <person name="Li W."/>
            <person name="Zhang B."/>
            <person name="Hu W."/>
            <person name="Zhang Y."/>
            <person name="Tian X."/>
            <person name="Jiao Y."/>
            <person name="Liang X."/>
            <person name="Jin J."/>
            <person name="Gao L."/>
            <person name="Zheng W."/>
            <person name="Hao B."/>
            <person name="Liu S.-M."/>
            <person name="Wang W."/>
            <person name="Yuan L."/>
            <person name="Cao M."/>
            <person name="McDermott J."/>
            <person name="Samudrala R."/>
            <person name="Wang J."/>
            <person name="Wong G.K.-S."/>
            <person name="Yang H."/>
        </authorList>
    </citation>
    <scope>NUCLEOTIDE SEQUENCE [LARGE SCALE GENOMIC DNA]</scope>
    <source>
        <strain>cv. Nipponbare</strain>
    </source>
</reference>
<reference key="5">
    <citation type="submission" date="2006-10" db="EMBL/GenBank/DDBJ databases">
        <title>Oryza sativa full length cDNA.</title>
        <authorList>
            <consortium name="The rice full-length cDNA consortium"/>
        </authorList>
    </citation>
    <scope>NUCLEOTIDE SEQUENCE [LARGE SCALE MRNA] (ISOFORM 2)</scope>
    <source>
        <strain>cv. Nipponbare</strain>
    </source>
</reference>
<comment type="subcellular location">
    <subcellularLocation>
        <location evidence="5">Membrane</location>
        <topology evidence="5">Multi-pass membrane protein</topology>
    </subcellularLocation>
</comment>
<comment type="alternative products">
    <event type="alternative splicing"/>
    <isoform>
        <id>Q658H5-1</id>
        <name>1</name>
        <sequence type="displayed"/>
    </isoform>
    <isoform>
        <id>Q658H5-2</id>
        <name>2</name>
        <sequence type="described" ref="VSP_039766 VSP_039767"/>
    </isoform>
</comment>
<comment type="similarity">
    <text evidence="5">Belongs to the major facilitator superfamily.</text>
</comment>
<comment type="sequence caution" evidence="5">
    <conflict type="erroneous gene model prediction">
        <sequence resource="EMBL-CDS" id="BAF18595"/>
    </conflict>
</comment>
<sequence>MVNFGKKLMADQIPEWKGYYINYKLMKKKVKQYGQQVQQGEKDRRRVLKDFSKMLDDQIEKIVLFLLEQQGALASRIEKLGKQRAILAEQPDISAIAELREAYREVGLDLIKLLKFVDLNATGIRKILKKFDKRFGYRFTDYYVTSRSNHPYSQLQQVFKHVGVGAVVGALSRNLADLQERQGSYLSIYDQPSTALKDPIIDMINSSVDKLTRSTNFLRFLGQHALIVGEESPSTAEEEEIEDQKYHFMSLMLNLVNTFLYMVNTYIIVPTADDYSVSLGAASTVCGVVIGSMAVAQIFSSVYFSAWSNKSYFRPLIFSSIVLFLGNVCYAMAYDMKSLTVLIIGRLLCGMGSARAVNRRYISDCVPARIRMQASAGFVSASALGMACGPALAGLLQWKFKIYMVTFNQSTLPGWVMAVAWLLYLVWLWISFKEPNRATEVNGTQQNPASVQRADIEQLENGLAQPLLRDSSKKDEDDDEEVDDSEEGTHDSRKPATSIGSAYRLLTPSVKVQLLIYFMLKYAMEILLSESSVITNHYFNWNTSAVAIFLAILGLTVLPVNAVVGTYISNMFEDRQLLMVSQITLLVGIIFSFKITSTYSVVQYVVSALVTFVSAEVLEGVNLSLLSSVMSSRLSRGTYNGGLLSTEAGTLARVVADCTITAAGYLGIGKLLNVTLLPSLVICAASIASTFLTYNSLF</sequence>
<proteinExistence type="evidence at transcript level"/>
<gene>
    <name type="ordered locus">Os06g0129400</name>
    <name type="ordered locus">LOC_Os06g03860</name>
    <name type="ORF">OsJ_19983</name>
    <name type="ORF">P0538C01.18</name>
</gene>
<feature type="chain" id="PRO_0000398575" description="SPX domain-containing membrane protein Os06g0129400">
    <location>
        <begin position="1"/>
        <end position="698"/>
    </location>
</feature>
<feature type="transmembrane region" description="Helical" evidence="1">
    <location>
        <begin position="248"/>
        <end position="268"/>
    </location>
</feature>
<feature type="transmembrane region" description="Helical" evidence="1">
    <location>
        <begin position="279"/>
        <end position="299"/>
    </location>
</feature>
<feature type="transmembrane region" description="Helical" evidence="1">
    <location>
        <begin position="316"/>
        <end position="336"/>
    </location>
</feature>
<feature type="transmembrane region" description="Helical" evidence="1">
    <location>
        <begin position="339"/>
        <end position="357"/>
    </location>
</feature>
<feature type="transmembrane region" description="Helical" evidence="1">
    <location>
        <begin position="376"/>
        <end position="396"/>
    </location>
</feature>
<feature type="transmembrane region" description="Helical" evidence="1">
    <location>
        <begin position="412"/>
        <end position="432"/>
    </location>
</feature>
<feature type="transmembrane region" description="Helical" evidence="1">
    <location>
        <begin position="514"/>
        <end position="534"/>
    </location>
</feature>
<feature type="transmembrane region" description="Helical" evidence="1">
    <location>
        <begin position="545"/>
        <end position="565"/>
    </location>
</feature>
<feature type="transmembrane region" description="Helical" evidence="1">
    <location>
        <begin position="577"/>
        <end position="597"/>
    </location>
</feature>
<feature type="transmembrane region" description="Helical" evidence="1">
    <location>
        <begin position="605"/>
        <end position="625"/>
    </location>
</feature>
<feature type="transmembrane region" description="Helical" evidence="1">
    <location>
        <begin position="671"/>
        <end position="691"/>
    </location>
</feature>
<feature type="domain" description="SPX" evidence="2">
    <location>
        <begin position="2"/>
        <end position="145"/>
    </location>
</feature>
<feature type="region of interest" description="Disordered" evidence="3">
    <location>
        <begin position="467"/>
        <end position="495"/>
    </location>
</feature>
<feature type="compositionally biased region" description="Acidic residues" evidence="3">
    <location>
        <begin position="476"/>
        <end position="486"/>
    </location>
</feature>
<feature type="splice variant" id="VSP_039766" description="In isoform 2." evidence="4">
    <original>VQLLIYFMLKYAMEILLSESSVITNHYFNWNTSAVAIFLAILGLTV</original>
    <variation>QHVRGQATPDGVSNHTAGRHYFQLQNHEHILGCPVCRLSTGHICVC</variation>
    <location>
        <begin position="512"/>
        <end position="557"/>
    </location>
</feature>
<feature type="splice variant" id="VSP_039767" description="In isoform 2." evidence="4">
    <location>
        <begin position="558"/>
        <end position="698"/>
    </location>
</feature>
<keyword id="KW-0025">Alternative splicing</keyword>
<keyword id="KW-0472">Membrane</keyword>
<keyword id="KW-1185">Reference proteome</keyword>
<keyword id="KW-0812">Transmembrane</keyword>
<keyword id="KW-1133">Transmembrane helix</keyword>
<dbReference type="EMBL" id="AP000391">
    <property type="protein sequence ID" value="BAD44792.1"/>
    <property type="molecule type" value="Genomic_DNA"/>
</dbReference>
<dbReference type="EMBL" id="AP008212">
    <property type="protein sequence ID" value="BAF18595.2"/>
    <property type="status" value="ALT_SEQ"/>
    <property type="molecule type" value="Genomic_DNA"/>
</dbReference>
<dbReference type="EMBL" id="AP014962">
    <property type="protein sequence ID" value="BAS95961.1"/>
    <property type="molecule type" value="Genomic_DNA"/>
</dbReference>
<dbReference type="EMBL" id="CM000143">
    <property type="protein sequence ID" value="EAZ35695.1"/>
    <property type="molecule type" value="Genomic_DNA"/>
</dbReference>
<dbReference type="EMBL" id="AK243620">
    <property type="status" value="NOT_ANNOTATED_CDS"/>
    <property type="molecule type" value="mRNA"/>
</dbReference>
<dbReference type="RefSeq" id="XP_015643652.1">
    <property type="nucleotide sequence ID" value="XM_015788166.1"/>
</dbReference>
<dbReference type="FunCoup" id="Q658H5">
    <property type="interactions" value="4"/>
</dbReference>
<dbReference type="STRING" id="39947.Q658H5"/>
<dbReference type="PaxDb" id="39947-Q658H5"/>
<dbReference type="EnsemblPlants" id="Os06t0129400-02">
    <molecule id="Q658H5-1"/>
    <property type="protein sequence ID" value="Os06t0129400-02"/>
    <property type="gene ID" value="Os06g0129400"/>
</dbReference>
<dbReference type="Gramene" id="Os06t0129400-02">
    <molecule id="Q658H5-1"/>
    <property type="protein sequence ID" value="Os06t0129400-02"/>
    <property type="gene ID" value="Os06g0129400"/>
</dbReference>
<dbReference type="KEGG" id="dosa:Os06g0129400"/>
<dbReference type="eggNOG" id="KOG1161">
    <property type="taxonomic scope" value="Eukaryota"/>
</dbReference>
<dbReference type="eggNOG" id="KOG2325">
    <property type="taxonomic scope" value="Eukaryota"/>
</dbReference>
<dbReference type="InParanoid" id="Q658H5"/>
<dbReference type="OMA" id="ITMNANT"/>
<dbReference type="OrthoDB" id="5588846at2759"/>
<dbReference type="Proteomes" id="UP000000763">
    <property type="component" value="Chromosome 6"/>
</dbReference>
<dbReference type="Proteomes" id="UP000007752">
    <property type="component" value="Chromosome 6"/>
</dbReference>
<dbReference type="Proteomes" id="UP000059680">
    <property type="component" value="Chromosome 6"/>
</dbReference>
<dbReference type="GO" id="GO:0016020">
    <property type="term" value="C:membrane"/>
    <property type="evidence" value="ECO:0000318"/>
    <property type="project" value="GO_Central"/>
</dbReference>
<dbReference type="GO" id="GO:0022857">
    <property type="term" value="F:transmembrane transporter activity"/>
    <property type="evidence" value="ECO:0000318"/>
    <property type="project" value="GO_Central"/>
</dbReference>
<dbReference type="CDD" id="cd14479">
    <property type="entry name" value="SPX-MFS_plant"/>
    <property type="match status" value="1"/>
</dbReference>
<dbReference type="Gene3D" id="1.20.1250.20">
    <property type="entry name" value="MFS general substrate transporter like domains"/>
    <property type="match status" value="1"/>
</dbReference>
<dbReference type="InterPro" id="IPR011701">
    <property type="entry name" value="MFS"/>
</dbReference>
<dbReference type="InterPro" id="IPR051068">
    <property type="entry name" value="MFS_Domain-Containing_Protein"/>
</dbReference>
<dbReference type="InterPro" id="IPR036259">
    <property type="entry name" value="MFS_trans_sf"/>
</dbReference>
<dbReference type="InterPro" id="IPR004331">
    <property type="entry name" value="SPX_dom"/>
</dbReference>
<dbReference type="InterPro" id="IPR045264">
    <property type="entry name" value="SPXM_SPX_plant"/>
</dbReference>
<dbReference type="PANTHER" id="PTHR23510">
    <property type="entry name" value="INNER MEMBRANE TRANSPORT PROTEIN YAJR"/>
    <property type="match status" value="1"/>
</dbReference>
<dbReference type="PANTHER" id="PTHR23510:SF78">
    <property type="entry name" value="SPX DOMAIN-CONTAINING MEMBRANE PROTEIN OS06G0129400"/>
    <property type="match status" value="1"/>
</dbReference>
<dbReference type="Pfam" id="PF07690">
    <property type="entry name" value="MFS_1"/>
    <property type="match status" value="1"/>
</dbReference>
<dbReference type="Pfam" id="PF03105">
    <property type="entry name" value="SPX"/>
    <property type="match status" value="1"/>
</dbReference>
<dbReference type="SUPFAM" id="SSF103473">
    <property type="entry name" value="MFS general substrate transporter"/>
    <property type="match status" value="1"/>
</dbReference>
<dbReference type="PROSITE" id="PS51382">
    <property type="entry name" value="SPX"/>
    <property type="match status" value="1"/>
</dbReference>